<organism>
    <name type="scientific">Actinosynnema pretiosum subsp. auranticum</name>
    <dbReference type="NCBI Taxonomy" id="42198"/>
    <lineage>
        <taxon>Bacteria</taxon>
        <taxon>Bacillati</taxon>
        <taxon>Actinomycetota</taxon>
        <taxon>Actinomycetes</taxon>
        <taxon>Pseudonocardiales</taxon>
        <taxon>Pseudonocardiaceae</taxon>
        <taxon>Actinosynnema</taxon>
    </lineage>
</organism>
<keyword id="KW-0028">Amino-acid biosynthesis</keyword>
<keyword id="KW-0210">Decarboxylase</keyword>
<keyword id="KW-0456">Lyase</keyword>
<keyword id="KW-0457">Lysine biosynthesis</keyword>
<keyword id="KW-0663">Pyridoxal phosphate</keyword>
<sequence length="437" mass="46641">MTLAELLPSVGMTGEPALETGLWPLGTRLERGELLLGGVPATELAARFGTPCQVLDEGTVRARARAFREALPEAEVVFAGKALPCREVYRWVADEGLSLDVCSAGELAIARSVGFPAERVLLHGNVKTPEDLKAALGYGVGRVVVDSFDEIEQLGALAEGPQDVLVRVTPGVDPRTHRAVATGVEDQKFGFSLAGGDALEAVLRVVEQPSLRLVGLHCHVGSQVRHVAVYEEAARRVVGLIASCGVRIEQLDLGGGFAVPYLPGEGEFDLGGFAHRVRVALSHECALRRVPVPRLSIEPGRAVVARAGVTLYRVAAVKRGVRRVFVAVDGGMSDNPRPALYGSRYAVRLVRRGGRRAPVTVVGRHCEAGDVLAEDVPLPEDVRAGDLLAVPVTGAYHHALASNYNAVGRPPVVGVRDGVARVLVRRETEEDLLRREV</sequence>
<reference key="1">
    <citation type="submission" date="1998-04" db="EMBL/GenBank/DDBJ databases">
        <authorList>
            <person name="Hoffmann D."/>
            <person name="August P.R."/>
            <person name="Kim C.G."/>
            <person name="Floss H.G."/>
            <person name="Leistner E."/>
        </authorList>
    </citation>
    <scope>NUCLEOTIDE SEQUENCE [GENOMIC DNA]</scope>
    <source>
        <strain>ATCC 31565 / IFO 13963 / N-1231</strain>
    </source>
</reference>
<proteinExistence type="inferred from homology"/>
<accession>O69203</accession>
<gene>
    <name evidence="2" type="primary">lysA</name>
</gene>
<comment type="function">
    <text evidence="2">Specifically catalyzes the decarboxylation of meso-diaminopimelate (meso-DAP) to L-lysine.</text>
</comment>
<comment type="catalytic activity">
    <reaction evidence="2">
        <text>meso-2,6-diaminopimelate + H(+) = L-lysine + CO2</text>
        <dbReference type="Rhea" id="RHEA:15101"/>
        <dbReference type="ChEBI" id="CHEBI:15378"/>
        <dbReference type="ChEBI" id="CHEBI:16526"/>
        <dbReference type="ChEBI" id="CHEBI:32551"/>
        <dbReference type="ChEBI" id="CHEBI:57791"/>
        <dbReference type="EC" id="4.1.1.20"/>
    </reaction>
</comment>
<comment type="cofactor">
    <cofactor evidence="2">
        <name>pyridoxal 5'-phosphate</name>
        <dbReference type="ChEBI" id="CHEBI:597326"/>
    </cofactor>
</comment>
<comment type="pathway">
    <text evidence="2">Amino-acid biosynthesis; L-lysine biosynthesis via DAP pathway; L-lysine from DL-2,6-diaminopimelate: step 1/1.</text>
</comment>
<comment type="subunit">
    <text evidence="2">Homodimer.</text>
</comment>
<comment type="similarity">
    <text evidence="2">Belongs to the Orn/Lys/Arg decarboxylase class-II family. LysA subfamily.</text>
</comment>
<evidence type="ECO:0000255" key="1"/>
<evidence type="ECO:0000255" key="2">
    <source>
        <dbReference type="HAMAP-Rule" id="MF_02120"/>
    </source>
</evidence>
<feature type="chain" id="PRO_0000149911" description="Diaminopimelate decarboxylase">
    <location>
        <begin position="1"/>
        <end position="437"/>
    </location>
</feature>
<feature type="active site" description="Proton donor" evidence="1">
    <location>
        <position position="366"/>
    </location>
</feature>
<feature type="binding site" evidence="2">
    <location>
        <position position="256"/>
    </location>
    <ligand>
        <name>pyridoxal 5'-phosphate</name>
        <dbReference type="ChEBI" id="CHEBI:597326"/>
    </ligand>
</feature>
<feature type="binding site" evidence="2">
    <location>
        <begin position="298"/>
        <end position="301"/>
    </location>
    <ligand>
        <name>pyridoxal 5'-phosphate</name>
        <dbReference type="ChEBI" id="CHEBI:597326"/>
    </ligand>
</feature>
<feature type="binding site" evidence="2">
    <location>
        <position position="301"/>
    </location>
    <ligand>
        <name>substrate</name>
    </ligand>
</feature>
<feature type="binding site" evidence="2">
    <location>
        <position position="337"/>
    </location>
    <ligand>
        <name>substrate</name>
    </ligand>
</feature>
<feature type="binding site" evidence="2">
    <location>
        <position position="341"/>
    </location>
    <ligand>
        <name>substrate</name>
    </ligand>
</feature>
<feature type="binding site" evidence="2">
    <location>
        <position position="367"/>
    </location>
    <ligand>
        <name>substrate</name>
    </ligand>
</feature>
<feature type="binding site" evidence="2">
    <location>
        <position position="396"/>
    </location>
    <ligand>
        <name>pyridoxal 5'-phosphate</name>
        <dbReference type="ChEBI" id="CHEBI:597326"/>
    </ligand>
</feature>
<feature type="binding site" evidence="2">
    <location>
        <position position="396"/>
    </location>
    <ligand>
        <name>substrate</name>
    </ligand>
</feature>
<feature type="modified residue" description="N6-(pyridoxal phosphate)lysine" evidence="2">
    <location>
        <position position="81"/>
    </location>
</feature>
<dbReference type="EC" id="4.1.1.20" evidence="2"/>
<dbReference type="EMBL" id="U33059">
    <property type="protein sequence ID" value="AAC13998.1"/>
    <property type="molecule type" value="Genomic_DNA"/>
</dbReference>
<dbReference type="SMR" id="O69203"/>
<dbReference type="UniPathway" id="UPA00034">
    <property type="reaction ID" value="UER00027"/>
</dbReference>
<dbReference type="GO" id="GO:0008836">
    <property type="term" value="F:diaminopimelate decarboxylase activity"/>
    <property type="evidence" value="ECO:0007669"/>
    <property type="project" value="UniProtKB-UniRule"/>
</dbReference>
<dbReference type="GO" id="GO:0030170">
    <property type="term" value="F:pyridoxal phosphate binding"/>
    <property type="evidence" value="ECO:0007669"/>
    <property type="project" value="UniProtKB-UniRule"/>
</dbReference>
<dbReference type="GO" id="GO:0009089">
    <property type="term" value="P:lysine biosynthetic process via diaminopimelate"/>
    <property type="evidence" value="ECO:0007669"/>
    <property type="project" value="UniProtKB-UniRule"/>
</dbReference>
<dbReference type="CDD" id="cd06828">
    <property type="entry name" value="PLPDE_III_DapDC"/>
    <property type="match status" value="1"/>
</dbReference>
<dbReference type="FunFam" id="3.20.20.10:FF:000003">
    <property type="entry name" value="Diaminopimelate decarboxylase"/>
    <property type="match status" value="1"/>
</dbReference>
<dbReference type="Gene3D" id="3.20.20.10">
    <property type="entry name" value="Alanine racemase"/>
    <property type="match status" value="1"/>
</dbReference>
<dbReference type="Gene3D" id="2.40.37.10">
    <property type="entry name" value="Lyase, Ornithine Decarboxylase, Chain A, domain 1"/>
    <property type="match status" value="1"/>
</dbReference>
<dbReference type="HAMAP" id="MF_02120">
    <property type="entry name" value="LysA"/>
    <property type="match status" value="1"/>
</dbReference>
<dbReference type="InterPro" id="IPR009006">
    <property type="entry name" value="Ala_racemase/Decarboxylase_C"/>
</dbReference>
<dbReference type="InterPro" id="IPR002986">
    <property type="entry name" value="DAP_deCOOHase_LysA"/>
</dbReference>
<dbReference type="InterPro" id="IPR022643">
    <property type="entry name" value="De-COase2_C"/>
</dbReference>
<dbReference type="InterPro" id="IPR022644">
    <property type="entry name" value="De-COase2_N"/>
</dbReference>
<dbReference type="InterPro" id="IPR000183">
    <property type="entry name" value="Orn/DAP/Arg_de-COase"/>
</dbReference>
<dbReference type="InterPro" id="IPR029066">
    <property type="entry name" value="PLP-binding_barrel"/>
</dbReference>
<dbReference type="NCBIfam" id="TIGR01048">
    <property type="entry name" value="lysA"/>
    <property type="match status" value="1"/>
</dbReference>
<dbReference type="PANTHER" id="PTHR43727">
    <property type="entry name" value="DIAMINOPIMELATE DECARBOXYLASE"/>
    <property type="match status" value="1"/>
</dbReference>
<dbReference type="PANTHER" id="PTHR43727:SF2">
    <property type="entry name" value="GROUP IV DECARBOXYLASE"/>
    <property type="match status" value="1"/>
</dbReference>
<dbReference type="Pfam" id="PF02784">
    <property type="entry name" value="Orn_Arg_deC_N"/>
    <property type="match status" value="1"/>
</dbReference>
<dbReference type="Pfam" id="PF00278">
    <property type="entry name" value="Orn_DAP_Arg_deC"/>
    <property type="match status" value="1"/>
</dbReference>
<dbReference type="PRINTS" id="PR01181">
    <property type="entry name" value="DAPDCRBXLASE"/>
</dbReference>
<dbReference type="PRINTS" id="PR01179">
    <property type="entry name" value="ODADCRBXLASE"/>
</dbReference>
<dbReference type="SUPFAM" id="SSF50621">
    <property type="entry name" value="Alanine racemase C-terminal domain-like"/>
    <property type="match status" value="1"/>
</dbReference>
<dbReference type="SUPFAM" id="SSF51419">
    <property type="entry name" value="PLP-binding barrel"/>
    <property type="match status" value="1"/>
</dbReference>
<protein>
    <recommendedName>
        <fullName evidence="2">Diaminopimelate decarboxylase</fullName>
        <shortName evidence="2">DAP decarboxylase</shortName>
        <shortName evidence="2">DAPDC</shortName>
        <ecNumber evidence="2">4.1.1.20</ecNumber>
    </recommendedName>
</protein>
<name>DCDA_ACTPA</name>